<organism>
    <name type="scientific">Idiomarina loihiensis (strain ATCC BAA-735 / DSM 15497 / L2-TR)</name>
    <dbReference type="NCBI Taxonomy" id="283942"/>
    <lineage>
        <taxon>Bacteria</taxon>
        <taxon>Pseudomonadati</taxon>
        <taxon>Pseudomonadota</taxon>
        <taxon>Gammaproteobacteria</taxon>
        <taxon>Alteromonadales</taxon>
        <taxon>Idiomarinaceae</taxon>
        <taxon>Idiomarina</taxon>
    </lineage>
</organism>
<protein>
    <recommendedName>
        <fullName evidence="1">Thymidylate synthase</fullName>
        <shortName evidence="1">TS</shortName>
        <shortName evidence="1">TSase</shortName>
        <ecNumber evidence="1">2.1.1.45</ecNumber>
    </recommendedName>
</protein>
<name>TYSY_IDILO</name>
<feature type="chain" id="PRO_0000140965" description="Thymidylate synthase">
    <location>
        <begin position="1"/>
        <end position="283"/>
    </location>
</feature>
<feature type="active site" description="Nucleophile" evidence="1">
    <location>
        <position position="160"/>
    </location>
</feature>
<feature type="binding site" evidence="1">
    <location>
        <position position="22"/>
    </location>
    <ligand>
        <name>dUMP</name>
        <dbReference type="ChEBI" id="CHEBI:246422"/>
    </ligand>
</feature>
<feature type="binding site" evidence="1">
    <location>
        <begin position="180"/>
        <end position="183"/>
    </location>
    <ligand>
        <name>dUMP</name>
        <dbReference type="ChEBI" id="CHEBI:246422"/>
    </ligand>
</feature>
<feature type="binding site" evidence="1">
    <location>
        <position position="183"/>
    </location>
    <ligand>
        <name>(6R)-5,10-methylene-5,6,7,8-tetrahydrofolate</name>
        <dbReference type="ChEBI" id="CHEBI:15636"/>
    </ligand>
</feature>
<feature type="binding site" evidence="1">
    <location>
        <position position="191"/>
    </location>
    <ligand>
        <name>dUMP</name>
        <dbReference type="ChEBI" id="CHEBI:246422"/>
    </ligand>
</feature>
<feature type="binding site" evidence="1">
    <location>
        <begin position="221"/>
        <end position="223"/>
    </location>
    <ligand>
        <name>dUMP</name>
        <dbReference type="ChEBI" id="CHEBI:246422"/>
    </ligand>
</feature>
<feature type="binding site" evidence="1">
    <location>
        <position position="282"/>
    </location>
    <ligand>
        <name>(6R)-5,10-methylene-5,6,7,8-tetrahydrofolate</name>
        <dbReference type="ChEBI" id="CHEBI:15636"/>
    </ligand>
</feature>
<gene>
    <name evidence="1" type="primary">thyA</name>
    <name type="ordered locus">IL0507</name>
</gene>
<sequence>MKQYLQLCQRIVDEGVWVKNERTGINCLTVINADLEYDVANNQFPLITTRKSYYKSAIAELLGYLRGYNSAAQFRDIGCKTWDANANENQAWLNNPNRKGEDDMGRVYGVQGRSWQKPDGSHLDQLKKVINNLSKGIDDRGEIVTFYNPGEFELGCLRPCMHTHNFSLLGDTLYLTSYQRSCDVPLGLNFNQIQCFALLALVAQITGHKPGKAYHKIVNAHIYENQLELMRDVQLKREPFPSPQLHINPEIKSLEDIETWVSKDDFIVSGYQCHDPIKYPFAV</sequence>
<evidence type="ECO:0000255" key="1">
    <source>
        <dbReference type="HAMAP-Rule" id="MF_00008"/>
    </source>
</evidence>
<proteinExistence type="inferred from homology"/>
<dbReference type="EC" id="2.1.1.45" evidence="1"/>
<dbReference type="EMBL" id="AE017340">
    <property type="protein sequence ID" value="AAV81350.1"/>
    <property type="molecule type" value="Genomic_DNA"/>
</dbReference>
<dbReference type="RefSeq" id="WP_011233767.1">
    <property type="nucleotide sequence ID" value="NC_006512.1"/>
</dbReference>
<dbReference type="SMR" id="Q5R064"/>
<dbReference type="STRING" id="283942.IL0507"/>
<dbReference type="GeneID" id="41335658"/>
<dbReference type="KEGG" id="ilo:IL0507"/>
<dbReference type="eggNOG" id="COG0207">
    <property type="taxonomic scope" value="Bacteria"/>
</dbReference>
<dbReference type="HOGENOM" id="CLU_021669_0_1_6"/>
<dbReference type="OrthoDB" id="9774633at2"/>
<dbReference type="UniPathway" id="UPA00575"/>
<dbReference type="Proteomes" id="UP000001171">
    <property type="component" value="Chromosome"/>
</dbReference>
<dbReference type="GO" id="GO:0005829">
    <property type="term" value="C:cytosol"/>
    <property type="evidence" value="ECO:0007669"/>
    <property type="project" value="TreeGrafter"/>
</dbReference>
<dbReference type="GO" id="GO:0004799">
    <property type="term" value="F:thymidylate synthase activity"/>
    <property type="evidence" value="ECO:0007669"/>
    <property type="project" value="UniProtKB-UniRule"/>
</dbReference>
<dbReference type="GO" id="GO:0006231">
    <property type="term" value="P:dTMP biosynthetic process"/>
    <property type="evidence" value="ECO:0007669"/>
    <property type="project" value="UniProtKB-UniRule"/>
</dbReference>
<dbReference type="GO" id="GO:0006235">
    <property type="term" value="P:dTTP biosynthetic process"/>
    <property type="evidence" value="ECO:0007669"/>
    <property type="project" value="UniProtKB-UniRule"/>
</dbReference>
<dbReference type="GO" id="GO:0032259">
    <property type="term" value="P:methylation"/>
    <property type="evidence" value="ECO:0007669"/>
    <property type="project" value="UniProtKB-KW"/>
</dbReference>
<dbReference type="CDD" id="cd00351">
    <property type="entry name" value="TS_Pyrimidine_HMase"/>
    <property type="match status" value="1"/>
</dbReference>
<dbReference type="Gene3D" id="3.30.572.10">
    <property type="entry name" value="Thymidylate synthase/dCMP hydroxymethylase domain"/>
    <property type="match status" value="1"/>
</dbReference>
<dbReference type="HAMAP" id="MF_00008">
    <property type="entry name" value="Thymidy_synth_bact"/>
    <property type="match status" value="1"/>
</dbReference>
<dbReference type="InterPro" id="IPR045097">
    <property type="entry name" value="Thymidate_synth/dCMP_Mease"/>
</dbReference>
<dbReference type="InterPro" id="IPR023451">
    <property type="entry name" value="Thymidate_synth/dCMP_Mease_dom"/>
</dbReference>
<dbReference type="InterPro" id="IPR036926">
    <property type="entry name" value="Thymidate_synth/dCMP_Mease_sf"/>
</dbReference>
<dbReference type="InterPro" id="IPR000398">
    <property type="entry name" value="Thymidylate_synthase"/>
</dbReference>
<dbReference type="NCBIfam" id="NF002498">
    <property type="entry name" value="PRK01827.1-4"/>
    <property type="match status" value="1"/>
</dbReference>
<dbReference type="NCBIfam" id="TIGR03284">
    <property type="entry name" value="thym_sym"/>
    <property type="match status" value="1"/>
</dbReference>
<dbReference type="PANTHER" id="PTHR11548:SF9">
    <property type="entry name" value="THYMIDYLATE SYNTHASE"/>
    <property type="match status" value="1"/>
</dbReference>
<dbReference type="PANTHER" id="PTHR11548">
    <property type="entry name" value="THYMIDYLATE SYNTHASE 1"/>
    <property type="match status" value="1"/>
</dbReference>
<dbReference type="Pfam" id="PF00303">
    <property type="entry name" value="Thymidylat_synt"/>
    <property type="match status" value="1"/>
</dbReference>
<dbReference type="PRINTS" id="PR00108">
    <property type="entry name" value="THYMDSNTHASE"/>
</dbReference>
<dbReference type="SUPFAM" id="SSF55831">
    <property type="entry name" value="Thymidylate synthase/dCMP hydroxymethylase"/>
    <property type="match status" value="1"/>
</dbReference>
<accession>Q5R064</accession>
<keyword id="KW-0963">Cytoplasm</keyword>
<keyword id="KW-0489">Methyltransferase</keyword>
<keyword id="KW-0545">Nucleotide biosynthesis</keyword>
<keyword id="KW-1185">Reference proteome</keyword>
<keyword id="KW-0808">Transferase</keyword>
<comment type="function">
    <text evidence="1">Catalyzes the reductive methylation of 2'-deoxyuridine-5'-monophosphate (dUMP) to 2'-deoxythymidine-5'-monophosphate (dTMP) while utilizing 5,10-methylenetetrahydrofolate (mTHF) as the methyl donor and reductant in the reaction, yielding dihydrofolate (DHF) as a by-product. This enzymatic reaction provides an intracellular de novo source of dTMP, an essential precursor for DNA biosynthesis.</text>
</comment>
<comment type="catalytic activity">
    <reaction evidence="1">
        <text>dUMP + (6R)-5,10-methylene-5,6,7,8-tetrahydrofolate = 7,8-dihydrofolate + dTMP</text>
        <dbReference type="Rhea" id="RHEA:12104"/>
        <dbReference type="ChEBI" id="CHEBI:15636"/>
        <dbReference type="ChEBI" id="CHEBI:57451"/>
        <dbReference type="ChEBI" id="CHEBI:63528"/>
        <dbReference type="ChEBI" id="CHEBI:246422"/>
        <dbReference type="EC" id="2.1.1.45"/>
    </reaction>
</comment>
<comment type="pathway">
    <text evidence="1">Pyrimidine metabolism; dTTP biosynthesis.</text>
</comment>
<comment type="subunit">
    <text evidence="1">Homodimer.</text>
</comment>
<comment type="subcellular location">
    <subcellularLocation>
        <location evidence="1">Cytoplasm</location>
    </subcellularLocation>
</comment>
<comment type="similarity">
    <text evidence="1">Belongs to the thymidylate synthase family. Bacterial-type ThyA subfamily.</text>
</comment>
<reference key="1">
    <citation type="journal article" date="2004" name="Proc. Natl. Acad. Sci. U.S.A.">
        <title>Genome sequence of the deep-sea gamma-proteobacterium Idiomarina loihiensis reveals amino acid fermentation as a source of carbon and energy.</title>
        <authorList>
            <person name="Hou S."/>
            <person name="Saw J.H."/>
            <person name="Lee K.S."/>
            <person name="Freitas T.A."/>
            <person name="Belisle C."/>
            <person name="Kawarabayasi Y."/>
            <person name="Donachie S.P."/>
            <person name="Pikina A."/>
            <person name="Galperin M.Y."/>
            <person name="Koonin E.V."/>
            <person name="Makarova K.S."/>
            <person name="Omelchenko M.V."/>
            <person name="Sorokin A."/>
            <person name="Wolf Y.I."/>
            <person name="Li Q.X."/>
            <person name="Keum Y.S."/>
            <person name="Campbell S."/>
            <person name="Denery J."/>
            <person name="Aizawa S."/>
            <person name="Shibata S."/>
            <person name="Malahoff A."/>
            <person name="Alam M."/>
        </authorList>
    </citation>
    <scope>NUCLEOTIDE SEQUENCE [LARGE SCALE GENOMIC DNA]</scope>
    <source>
        <strain>ATCC BAA-735 / DSM 15497 / L2-TR</strain>
    </source>
</reference>